<gene>
    <name evidence="1" type="primary">pth</name>
    <name type="ordered locus">Cag_1089</name>
</gene>
<accession>Q3ARM4</accession>
<name>PTH_CHLCH</name>
<proteinExistence type="inferred from homology"/>
<sequence length="190" mass="20451">MKLIIGLGNPGTEYDGTRHNIGFAVADALAAHHNASFSKEKGRYLSAKIKLGSESVGIIKPMTYMNHSGHAVVAAMNFYKVARTEIVVICDDLNLPVGTMRLRPKGSAGGQNGLKHIIECFGSNEFARLRIGIGSQNMPKGGFSSFVLGKFSEQEKSEIAIMTVSARDCAIDFALHGLGHAMNHFNTSKL</sequence>
<keyword id="KW-0963">Cytoplasm</keyword>
<keyword id="KW-0378">Hydrolase</keyword>
<keyword id="KW-0694">RNA-binding</keyword>
<keyword id="KW-0820">tRNA-binding</keyword>
<organism>
    <name type="scientific">Chlorobium chlorochromatii (strain CaD3)</name>
    <dbReference type="NCBI Taxonomy" id="340177"/>
    <lineage>
        <taxon>Bacteria</taxon>
        <taxon>Pseudomonadati</taxon>
        <taxon>Chlorobiota</taxon>
        <taxon>Chlorobiia</taxon>
        <taxon>Chlorobiales</taxon>
        <taxon>Chlorobiaceae</taxon>
        <taxon>Chlorobium/Pelodictyon group</taxon>
        <taxon>Chlorobium</taxon>
    </lineage>
</organism>
<feature type="chain" id="PRO_0000264019" description="Peptidyl-tRNA hydrolase">
    <location>
        <begin position="1"/>
        <end position="190"/>
    </location>
</feature>
<feature type="active site" description="Proton acceptor" evidence="1">
    <location>
        <position position="19"/>
    </location>
</feature>
<feature type="binding site" evidence="1">
    <location>
        <position position="14"/>
    </location>
    <ligand>
        <name>tRNA</name>
        <dbReference type="ChEBI" id="CHEBI:17843"/>
    </ligand>
</feature>
<feature type="binding site" evidence="1">
    <location>
        <position position="64"/>
    </location>
    <ligand>
        <name>tRNA</name>
        <dbReference type="ChEBI" id="CHEBI:17843"/>
    </ligand>
</feature>
<feature type="binding site" evidence="1">
    <location>
        <position position="66"/>
    </location>
    <ligand>
        <name>tRNA</name>
        <dbReference type="ChEBI" id="CHEBI:17843"/>
    </ligand>
</feature>
<feature type="binding site" evidence="1">
    <location>
        <position position="112"/>
    </location>
    <ligand>
        <name>tRNA</name>
        <dbReference type="ChEBI" id="CHEBI:17843"/>
    </ligand>
</feature>
<feature type="site" description="Discriminates between blocked and unblocked aminoacyl-tRNA" evidence="1">
    <location>
        <position position="9"/>
    </location>
</feature>
<feature type="site" description="Stabilizes the basic form of H active site to accept a proton" evidence="1">
    <location>
        <position position="91"/>
    </location>
</feature>
<dbReference type="EC" id="3.1.1.29" evidence="1"/>
<dbReference type="EMBL" id="CP000108">
    <property type="protein sequence ID" value="ABB28351.1"/>
    <property type="status" value="ALT_INIT"/>
    <property type="molecule type" value="Genomic_DNA"/>
</dbReference>
<dbReference type="SMR" id="Q3ARM4"/>
<dbReference type="STRING" id="340177.Cag_1089"/>
<dbReference type="KEGG" id="cch:Cag_1089"/>
<dbReference type="eggNOG" id="COG0193">
    <property type="taxonomic scope" value="Bacteria"/>
</dbReference>
<dbReference type="HOGENOM" id="CLU_062456_4_1_10"/>
<dbReference type="OrthoDB" id="9800507at2"/>
<dbReference type="GO" id="GO:0005737">
    <property type="term" value="C:cytoplasm"/>
    <property type="evidence" value="ECO:0007669"/>
    <property type="project" value="UniProtKB-SubCell"/>
</dbReference>
<dbReference type="GO" id="GO:0004045">
    <property type="term" value="F:peptidyl-tRNA hydrolase activity"/>
    <property type="evidence" value="ECO:0007669"/>
    <property type="project" value="UniProtKB-UniRule"/>
</dbReference>
<dbReference type="GO" id="GO:0000049">
    <property type="term" value="F:tRNA binding"/>
    <property type="evidence" value="ECO:0007669"/>
    <property type="project" value="UniProtKB-UniRule"/>
</dbReference>
<dbReference type="GO" id="GO:0006515">
    <property type="term" value="P:protein quality control for misfolded or incompletely synthesized proteins"/>
    <property type="evidence" value="ECO:0007669"/>
    <property type="project" value="UniProtKB-UniRule"/>
</dbReference>
<dbReference type="GO" id="GO:0072344">
    <property type="term" value="P:rescue of stalled ribosome"/>
    <property type="evidence" value="ECO:0007669"/>
    <property type="project" value="UniProtKB-UniRule"/>
</dbReference>
<dbReference type="CDD" id="cd00462">
    <property type="entry name" value="PTH"/>
    <property type="match status" value="1"/>
</dbReference>
<dbReference type="FunFam" id="3.40.50.1470:FF:000001">
    <property type="entry name" value="Peptidyl-tRNA hydrolase"/>
    <property type="match status" value="1"/>
</dbReference>
<dbReference type="Gene3D" id="3.40.50.1470">
    <property type="entry name" value="Peptidyl-tRNA hydrolase"/>
    <property type="match status" value="1"/>
</dbReference>
<dbReference type="HAMAP" id="MF_00083">
    <property type="entry name" value="Pept_tRNA_hydro_bact"/>
    <property type="match status" value="1"/>
</dbReference>
<dbReference type="InterPro" id="IPR001328">
    <property type="entry name" value="Pept_tRNA_hydro"/>
</dbReference>
<dbReference type="InterPro" id="IPR018171">
    <property type="entry name" value="Pept_tRNA_hydro_CS"/>
</dbReference>
<dbReference type="InterPro" id="IPR036416">
    <property type="entry name" value="Pept_tRNA_hydro_sf"/>
</dbReference>
<dbReference type="NCBIfam" id="TIGR00447">
    <property type="entry name" value="pth"/>
    <property type="match status" value="1"/>
</dbReference>
<dbReference type="PANTHER" id="PTHR17224">
    <property type="entry name" value="PEPTIDYL-TRNA HYDROLASE"/>
    <property type="match status" value="1"/>
</dbReference>
<dbReference type="PANTHER" id="PTHR17224:SF1">
    <property type="entry name" value="PEPTIDYL-TRNA HYDROLASE"/>
    <property type="match status" value="1"/>
</dbReference>
<dbReference type="Pfam" id="PF01195">
    <property type="entry name" value="Pept_tRNA_hydro"/>
    <property type="match status" value="1"/>
</dbReference>
<dbReference type="SUPFAM" id="SSF53178">
    <property type="entry name" value="Peptidyl-tRNA hydrolase-like"/>
    <property type="match status" value="1"/>
</dbReference>
<dbReference type="PROSITE" id="PS01195">
    <property type="entry name" value="PEPT_TRNA_HYDROL_1"/>
    <property type="match status" value="1"/>
</dbReference>
<protein>
    <recommendedName>
        <fullName evidence="1">Peptidyl-tRNA hydrolase</fullName>
        <shortName evidence="1">Pth</shortName>
        <ecNumber evidence="1">3.1.1.29</ecNumber>
    </recommendedName>
</protein>
<comment type="function">
    <text evidence="1">Hydrolyzes ribosome-free peptidyl-tRNAs (with 1 or more amino acids incorporated), which drop off the ribosome during protein synthesis, or as a result of ribosome stalling.</text>
</comment>
<comment type="function">
    <text evidence="1">Catalyzes the release of premature peptidyl moieties from peptidyl-tRNA molecules trapped in stalled 50S ribosomal subunits, and thus maintains levels of free tRNAs and 50S ribosomes.</text>
</comment>
<comment type="catalytic activity">
    <reaction evidence="1">
        <text>an N-acyl-L-alpha-aminoacyl-tRNA + H2O = an N-acyl-L-amino acid + a tRNA + H(+)</text>
        <dbReference type="Rhea" id="RHEA:54448"/>
        <dbReference type="Rhea" id="RHEA-COMP:10123"/>
        <dbReference type="Rhea" id="RHEA-COMP:13883"/>
        <dbReference type="ChEBI" id="CHEBI:15377"/>
        <dbReference type="ChEBI" id="CHEBI:15378"/>
        <dbReference type="ChEBI" id="CHEBI:59874"/>
        <dbReference type="ChEBI" id="CHEBI:78442"/>
        <dbReference type="ChEBI" id="CHEBI:138191"/>
        <dbReference type="EC" id="3.1.1.29"/>
    </reaction>
</comment>
<comment type="subunit">
    <text evidence="1">Monomer.</text>
</comment>
<comment type="subcellular location">
    <subcellularLocation>
        <location evidence="1">Cytoplasm</location>
    </subcellularLocation>
</comment>
<comment type="similarity">
    <text evidence="1">Belongs to the PTH family.</text>
</comment>
<comment type="sequence caution" evidence="2">
    <conflict type="erroneous initiation">
        <sequence resource="EMBL-CDS" id="ABB28351"/>
    </conflict>
    <text>Extended N-terminus.</text>
</comment>
<reference key="1">
    <citation type="submission" date="2005-08" db="EMBL/GenBank/DDBJ databases">
        <title>Complete sequence of Chlorobium chlorochromatii CaD3.</title>
        <authorList>
            <consortium name="US DOE Joint Genome Institute"/>
            <person name="Copeland A."/>
            <person name="Lucas S."/>
            <person name="Lapidus A."/>
            <person name="Barry K."/>
            <person name="Detter J.C."/>
            <person name="Glavina T."/>
            <person name="Hammon N."/>
            <person name="Israni S."/>
            <person name="Pitluck S."/>
            <person name="Bryant D."/>
            <person name="Schmutz J."/>
            <person name="Larimer F."/>
            <person name="Land M."/>
            <person name="Kyrpides N."/>
            <person name="Ivanova N."/>
            <person name="Richardson P."/>
        </authorList>
    </citation>
    <scope>NUCLEOTIDE SEQUENCE [LARGE SCALE GENOMIC DNA]</scope>
    <source>
        <strain>CaD3</strain>
    </source>
</reference>
<evidence type="ECO:0000255" key="1">
    <source>
        <dbReference type="HAMAP-Rule" id="MF_00083"/>
    </source>
</evidence>
<evidence type="ECO:0000305" key="2"/>